<keyword id="KW-0012">Acyltransferase</keyword>
<keyword id="KW-0133">Cell shape</keyword>
<keyword id="KW-0961">Cell wall biogenesis/degradation</keyword>
<keyword id="KW-0963">Cytoplasm</keyword>
<keyword id="KW-0460">Magnesium</keyword>
<keyword id="KW-0479">Metal-binding</keyword>
<keyword id="KW-0511">Multifunctional enzyme</keyword>
<keyword id="KW-0548">Nucleotidyltransferase</keyword>
<keyword id="KW-0573">Peptidoglycan synthesis</keyword>
<keyword id="KW-0677">Repeat</keyword>
<keyword id="KW-0808">Transferase</keyword>
<feature type="chain" id="PRO_1000186501" description="Bifunctional protein GlmU">
    <location>
        <begin position="1"/>
        <end position="459"/>
    </location>
</feature>
<feature type="region of interest" description="Pyrophosphorylase" evidence="1">
    <location>
        <begin position="1"/>
        <end position="229"/>
    </location>
</feature>
<feature type="region of interest" description="Linker" evidence="1">
    <location>
        <begin position="230"/>
        <end position="250"/>
    </location>
</feature>
<feature type="region of interest" description="N-acetyltransferase" evidence="1">
    <location>
        <begin position="251"/>
        <end position="459"/>
    </location>
</feature>
<feature type="active site" description="Proton acceptor" evidence="1">
    <location>
        <position position="362"/>
    </location>
</feature>
<feature type="binding site" evidence="1">
    <location>
        <begin position="8"/>
        <end position="11"/>
    </location>
    <ligand>
        <name>UDP-N-acetyl-alpha-D-glucosamine</name>
        <dbReference type="ChEBI" id="CHEBI:57705"/>
    </ligand>
</feature>
<feature type="binding site" evidence="1">
    <location>
        <position position="22"/>
    </location>
    <ligand>
        <name>UDP-N-acetyl-alpha-D-glucosamine</name>
        <dbReference type="ChEBI" id="CHEBI:57705"/>
    </ligand>
</feature>
<feature type="binding site" evidence="1">
    <location>
        <position position="72"/>
    </location>
    <ligand>
        <name>UDP-N-acetyl-alpha-D-glucosamine</name>
        <dbReference type="ChEBI" id="CHEBI:57705"/>
    </ligand>
</feature>
<feature type="binding site" evidence="1">
    <location>
        <begin position="77"/>
        <end position="78"/>
    </location>
    <ligand>
        <name>UDP-N-acetyl-alpha-D-glucosamine</name>
        <dbReference type="ChEBI" id="CHEBI:57705"/>
    </ligand>
</feature>
<feature type="binding site" evidence="1">
    <location>
        <position position="102"/>
    </location>
    <ligand>
        <name>Mg(2+)</name>
        <dbReference type="ChEBI" id="CHEBI:18420"/>
    </ligand>
</feature>
<feature type="binding site" evidence="1">
    <location>
        <position position="139"/>
    </location>
    <ligand>
        <name>UDP-N-acetyl-alpha-D-glucosamine</name>
        <dbReference type="ChEBI" id="CHEBI:57705"/>
    </ligand>
</feature>
<feature type="binding site" evidence="1">
    <location>
        <position position="154"/>
    </location>
    <ligand>
        <name>UDP-N-acetyl-alpha-D-glucosamine</name>
        <dbReference type="ChEBI" id="CHEBI:57705"/>
    </ligand>
</feature>
<feature type="binding site" evidence="1">
    <location>
        <position position="169"/>
    </location>
    <ligand>
        <name>UDP-N-acetyl-alpha-D-glucosamine</name>
        <dbReference type="ChEBI" id="CHEBI:57705"/>
    </ligand>
</feature>
<feature type="binding site" evidence="1">
    <location>
        <position position="227"/>
    </location>
    <ligand>
        <name>Mg(2+)</name>
        <dbReference type="ChEBI" id="CHEBI:18420"/>
    </ligand>
</feature>
<feature type="binding site" evidence="1">
    <location>
        <position position="227"/>
    </location>
    <ligand>
        <name>UDP-N-acetyl-alpha-D-glucosamine</name>
        <dbReference type="ChEBI" id="CHEBI:57705"/>
    </ligand>
</feature>
<feature type="binding site" evidence="1">
    <location>
        <position position="332"/>
    </location>
    <ligand>
        <name>UDP-N-acetyl-alpha-D-glucosamine</name>
        <dbReference type="ChEBI" id="CHEBI:57705"/>
    </ligand>
</feature>
<feature type="binding site" evidence="1">
    <location>
        <position position="350"/>
    </location>
    <ligand>
        <name>UDP-N-acetyl-alpha-D-glucosamine</name>
        <dbReference type="ChEBI" id="CHEBI:57705"/>
    </ligand>
</feature>
<feature type="binding site" evidence="1">
    <location>
        <position position="365"/>
    </location>
    <ligand>
        <name>UDP-N-acetyl-alpha-D-glucosamine</name>
        <dbReference type="ChEBI" id="CHEBI:57705"/>
    </ligand>
</feature>
<feature type="binding site" evidence="1">
    <location>
        <position position="376"/>
    </location>
    <ligand>
        <name>UDP-N-acetyl-alpha-D-glucosamine</name>
        <dbReference type="ChEBI" id="CHEBI:57705"/>
    </ligand>
</feature>
<feature type="binding site" evidence="1">
    <location>
        <position position="379"/>
    </location>
    <ligand>
        <name>acetyl-CoA</name>
        <dbReference type="ChEBI" id="CHEBI:57288"/>
    </ligand>
</feature>
<feature type="binding site" evidence="1">
    <location>
        <begin position="385"/>
        <end position="386"/>
    </location>
    <ligand>
        <name>acetyl-CoA</name>
        <dbReference type="ChEBI" id="CHEBI:57288"/>
    </ligand>
</feature>
<feature type="binding site" evidence="1">
    <location>
        <position position="404"/>
    </location>
    <ligand>
        <name>acetyl-CoA</name>
        <dbReference type="ChEBI" id="CHEBI:57288"/>
    </ligand>
</feature>
<feature type="binding site" evidence="1">
    <location>
        <position position="422"/>
    </location>
    <ligand>
        <name>acetyl-CoA</name>
        <dbReference type="ChEBI" id="CHEBI:57288"/>
    </ligand>
</feature>
<feature type="binding site" evidence="1">
    <location>
        <position position="439"/>
    </location>
    <ligand>
        <name>acetyl-CoA</name>
        <dbReference type="ChEBI" id="CHEBI:57288"/>
    </ligand>
</feature>
<evidence type="ECO:0000255" key="1">
    <source>
        <dbReference type="HAMAP-Rule" id="MF_01631"/>
    </source>
</evidence>
<organism>
    <name type="scientific">Streptococcus pneumoniae (strain JJA)</name>
    <dbReference type="NCBI Taxonomy" id="488222"/>
    <lineage>
        <taxon>Bacteria</taxon>
        <taxon>Bacillati</taxon>
        <taxon>Bacillota</taxon>
        <taxon>Bacilli</taxon>
        <taxon>Lactobacillales</taxon>
        <taxon>Streptococcaceae</taxon>
        <taxon>Streptococcus</taxon>
    </lineage>
</organism>
<comment type="function">
    <text evidence="1">Catalyzes the last two sequential reactions in the de novo biosynthetic pathway for UDP-N-acetylglucosamine (UDP-GlcNAc). The C-terminal domain catalyzes the transfer of acetyl group from acetyl coenzyme A to glucosamine-1-phosphate (GlcN-1-P) to produce N-acetylglucosamine-1-phosphate (GlcNAc-1-P), which is converted into UDP-GlcNAc by the transfer of uridine 5-monophosphate (from uridine 5-triphosphate), a reaction catalyzed by the N-terminal domain.</text>
</comment>
<comment type="catalytic activity">
    <reaction evidence="1">
        <text>alpha-D-glucosamine 1-phosphate + acetyl-CoA = N-acetyl-alpha-D-glucosamine 1-phosphate + CoA + H(+)</text>
        <dbReference type="Rhea" id="RHEA:13725"/>
        <dbReference type="ChEBI" id="CHEBI:15378"/>
        <dbReference type="ChEBI" id="CHEBI:57287"/>
        <dbReference type="ChEBI" id="CHEBI:57288"/>
        <dbReference type="ChEBI" id="CHEBI:57776"/>
        <dbReference type="ChEBI" id="CHEBI:58516"/>
        <dbReference type="EC" id="2.3.1.157"/>
    </reaction>
</comment>
<comment type="catalytic activity">
    <reaction evidence="1">
        <text>N-acetyl-alpha-D-glucosamine 1-phosphate + UTP + H(+) = UDP-N-acetyl-alpha-D-glucosamine + diphosphate</text>
        <dbReference type="Rhea" id="RHEA:13509"/>
        <dbReference type="ChEBI" id="CHEBI:15378"/>
        <dbReference type="ChEBI" id="CHEBI:33019"/>
        <dbReference type="ChEBI" id="CHEBI:46398"/>
        <dbReference type="ChEBI" id="CHEBI:57705"/>
        <dbReference type="ChEBI" id="CHEBI:57776"/>
        <dbReference type="EC" id="2.7.7.23"/>
    </reaction>
</comment>
<comment type="cofactor">
    <cofactor evidence="1">
        <name>Mg(2+)</name>
        <dbReference type="ChEBI" id="CHEBI:18420"/>
    </cofactor>
    <text evidence="1">Binds 1 Mg(2+) ion per subunit.</text>
</comment>
<comment type="pathway">
    <text evidence="1">Nucleotide-sugar biosynthesis; UDP-N-acetyl-alpha-D-glucosamine biosynthesis; N-acetyl-alpha-D-glucosamine 1-phosphate from alpha-D-glucosamine 6-phosphate (route II): step 2/2.</text>
</comment>
<comment type="pathway">
    <text evidence="1">Nucleotide-sugar biosynthesis; UDP-N-acetyl-alpha-D-glucosamine biosynthesis; UDP-N-acetyl-alpha-D-glucosamine from N-acetyl-alpha-D-glucosamine 1-phosphate: step 1/1.</text>
</comment>
<comment type="pathway">
    <text evidence="1">Bacterial outer membrane biogenesis; LPS lipid A biosynthesis.</text>
</comment>
<comment type="subunit">
    <text evidence="1">Homotrimer.</text>
</comment>
<comment type="subcellular location">
    <subcellularLocation>
        <location evidence="1">Cytoplasm</location>
    </subcellularLocation>
</comment>
<comment type="similarity">
    <text evidence="1">In the N-terminal section; belongs to the N-acetylglucosamine-1-phosphate uridyltransferase family.</text>
</comment>
<comment type="similarity">
    <text evidence="1">In the C-terminal section; belongs to the transferase hexapeptide repeat family.</text>
</comment>
<reference key="1">
    <citation type="journal article" date="2010" name="Genome Biol.">
        <title>Structure and dynamics of the pan-genome of Streptococcus pneumoniae and closely related species.</title>
        <authorList>
            <person name="Donati C."/>
            <person name="Hiller N.L."/>
            <person name="Tettelin H."/>
            <person name="Muzzi A."/>
            <person name="Croucher N.J."/>
            <person name="Angiuoli S.V."/>
            <person name="Oggioni M."/>
            <person name="Dunning Hotopp J.C."/>
            <person name="Hu F.Z."/>
            <person name="Riley D.R."/>
            <person name="Covacci A."/>
            <person name="Mitchell T.J."/>
            <person name="Bentley S.D."/>
            <person name="Kilian M."/>
            <person name="Ehrlich G.D."/>
            <person name="Rappuoli R."/>
            <person name="Moxon E.R."/>
            <person name="Masignani V."/>
        </authorList>
    </citation>
    <scope>NUCLEOTIDE SEQUENCE [LARGE SCALE GENOMIC DNA]</scope>
    <source>
        <strain>JJA</strain>
    </source>
</reference>
<name>GLMU_STRZJ</name>
<protein>
    <recommendedName>
        <fullName evidence="1">Bifunctional protein GlmU</fullName>
    </recommendedName>
    <domain>
        <recommendedName>
            <fullName evidence="1">UDP-N-acetylglucosamine pyrophosphorylase</fullName>
            <ecNumber evidence="1">2.7.7.23</ecNumber>
        </recommendedName>
        <alternativeName>
            <fullName evidence="1">N-acetylglucosamine-1-phosphate uridyltransferase</fullName>
        </alternativeName>
    </domain>
    <domain>
        <recommendedName>
            <fullName evidence="1">Glucosamine-1-phosphate N-acetyltransferase</fullName>
            <ecNumber evidence="1">2.3.1.157</ecNumber>
        </recommendedName>
    </domain>
</protein>
<gene>
    <name evidence="1" type="primary">glmU</name>
    <name type="ordered locus">SPJ_0929</name>
</gene>
<sequence>MSNFAIILAAGKGTRMKSDLPKVLHKVAGISMLEHVFRSVGAIQPEKTVTVVGHKAELVEEVLAGQTEFVTQSEQLGTGHAVMMTEPILEGLSGHTLVIAGDTPLITGESLKNLIDFHINHKNVATILTAETDNPFGYGRIVRNDNAEVLRIVEQKDATDFEKQIKEINTGTYVFDNERLFEALKNINTNNAQGEYYITDVIGIFRETGEKVGAYTLKDFDESLGVNDRVALATAESVMRRRINHKHMVNGVSFVNPEATYIDIDVEIALEVQIEANVTLKGQTKIGAETVLTNGTYVVDSTIGAGAVITNSMIEESSVADGVTVGPYAHIRPNSSLGAQVHIGNFVEVKGSSIGENTKAGHLTYIGNCEVGSNVNFGAGTITVNYDGKNKYKTVIGDNVFVGSNSTIIAPVELGDNSLVGAGSTITKDVPADAIAIGRGRQINKDEYATRLPHHPKNQ</sequence>
<proteinExistence type="inferred from homology"/>
<dbReference type="EC" id="2.7.7.23" evidence="1"/>
<dbReference type="EC" id="2.3.1.157" evidence="1"/>
<dbReference type="EMBL" id="CP000919">
    <property type="protein sequence ID" value="ACO18992.1"/>
    <property type="molecule type" value="Genomic_DNA"/>
</dbReference>
<dbReference type="RefSeq" id="WP_000064401.1">
    <property type="nucleotide sequence ID" value="NC_012466.1"/>
</dbReference>
<dbReference type="SMR" id="C1CDY3"/>
<dbReference type="KEGG" id="sjj:SPJ_0929"/>
<dbReference type="HOGENOM" id="CLU_029499_15_2_9"/>
<dbReference type="UniPathway" id="UPA00113">
    <property type="reaction ID" value="UER00532"/>
</dbReference>
<dbReference type="UniPathway" id="UPA00113">
    <property type="reaction ID" value="UER00533"/>
</dbReference>
<dbReference type="UniPathway" id="UPA00973"/>
<dbReference type="Proteomes" id="UP000002206">
    <property type="component" value="Chromosome"/>
</dbReference>
<dbReference type="GO" id="GO:0005737">
    <property type="term" value="C:cytoplasm"/>
    <property type="evidence" value="ECO:0007669"/>
    <property type="project" value="UniProtKB-SubCell"/>
</dbReference>
<dbReference type="GO" id="GO:0016020">
    <property type="term" value="C:membrane"/>
    <property type="evidence" value="ECO:0007669"/>
    <property type="project" value="GOC"/>
</dbReference>
<dbReference type="GO" id="GO:0019134">
    <property type="term" value="F:glucosamine-1-phosphate N-acetyltransferase activity"/>
    <property type="evidence" value="ECO:0007669"/>
    <property type="project" value="UniProtKB-UniRule"/>
</dbReference>
<dbReference type="GO" id="GO:0000287">
    <property type="term" value="F:magnesium ion binding"/>
    <property type="evidence" value="ECO:0007669"/>
    <property type="project" value="UniProtKB-UniRule"/>
</dbReference>
<dbReference type="GO" id="GO:0003977">
    <property type="term" value="F:UDP-N-acetylglucosamine diphosphorylase activity"/>
    <property type="evidence" value="ECO:0007669"/>
    <property type="project" value="UniProtKB-UniRule"/>
</dbReference>
<dbReference type="GO" id="GO:0000902">
    <property type="term" value="P:cell morphogenesis"/>
    <property type="evidence" value="ECO:0007669"/>
    <property type="project" value="UniProtKB-UniRule"/>
</dbReference>
<dbReference type="GO" id="GO:0071555">
    <property type="term" value="P:cell wall organization"/>
    <property type="evidence" value="ECO:0007669"/>
    <property type="project" value="UniProtKB-KW"/>
</dbReference>
<dbReference type="GO" id="GO:0009245">
    <property type="term" value="P:lipid A biosynthetic process"/>
    <property type="evidence" value="ECO:0007669"/>
    <property type="project" value="UniProtKB-UniRule"/>
</dbReference>
<dbReference type="GO" id="GO:0009252">
    <property type="term" value="P:peptidoglycan biosynthetic process"/>
    <property type="evidence" value="ECO:0007669"/>
    <property type="project" value="UniProtKB-UniRule"/>
</dbReference>
<dbReference type="GO" id="GO:0008360">
    <property type="term" value="P:regulation of cell shape"/>
    <property type="evidence" value="ECO:0007669"/>
    <property type="project" value="UniProtKB-KW"/>
</dbReference>
<dbReference type="GO" id="GO:0006048">
    <property type="term" value="P:UDP-N-acetylglucosamine biosynthetic process"/>
    <property type="evidence" value="ECO:0007669"/>
    <property type="project" value="UniProtKB-UniPathway"/>
</dbReference>
<dbReference type="CDD" id="cd02540">
    <property type="entry name" value="GT2_GlmU_N_bac"/>
    <property type="match status" value="1"/>
</dbReference>
<dbReference type="CDD" id="cd03353">
    <property type="entry name" value="LbH_GlmU_C"/>
    <property type="match status" value="1"/>
</dbReference>
<dbReference type="Gene3D" id="2.160.10.10">
    <property type="entry name" value="Hexapeptide repeat proteins"/>
    <property type="match status" value="1"/>
</dbReference>
<dbReference type="Gene3D" id="3.90.550.10">
    <property type="entry name" value="Spore Coat Polysaccharide Biosynthesis Protein SpsA, Chain A"/>
    <property type="match status" value="1"/>
</dbReference>
<dbReference type="HAMAP" id="MF_01631">
    <property type="entry name" value="GlmU"/>
    <property type="match status" value="1"/>
</dbReference>
<dbReference type="InterPro" id="IPR005882">
    <property type="entry name" value="Bifunctional_GlmU"/>
</dbReference>
<dbReference type="InterPro" id="IPR050065">
    <property type="entry name" value="GlmU-like"/>
</dbReference>
<dbReference type="InterPro" id="IPR038009">
    <property type="entry name" value="GlmU_C_LbH"/>
</dbReference>
<dbReference type="InterPro" id="IPR001451">
    <property type="entry name" value="Hexapep"/>
</dbReference>
<dbReference type="InterPro" id="IPR018357">
    <property type="entry name" value="Hexapep_transf_CS"/>
</dbReference>
<dbReference type="InterPro" id="IPR005835">
    <property type="entry name" value="NTP_transferase_dom"/>
</dbReference>
<dbReference type="InterPro" id="IPR029044">
    <property type="entry name" value="Nucleotide-diphossugar_trans"/>
</dbReference>
<dbReference type="InterPro" id="IPR011004">
    <property type="entry name" value="Trimer_LpxA-like_sf"/>
</dbReference>
<dbReference type="NCBIfam" id="TIGR01173">
    <property type="entry name" value="glmU"/>
    <property type="match status" value="1"/>
</dbReference>
<dbReference type="NCBIfam" id="NF010934">
    <property type="entry name" value="PRK14354.1"/>
    <property type="match status" value="1"/>
</dbReference>
<dbReference type="PANTHER" id="PTHR43584:SF3">
    <property type="entry name" value="BIFUNCTIONAL PROTEIN GLMU"/>
    <property type="match status" value="1"/>
</dbReference>
<dbReference type="PANTHER" id="PTHR43584">
    <property type="entry name" value="NUCLEOTIDYL TRANSFERASE"/>
    <property type="match status" value="1"/>
</dbReference>
<dbReference type="Pfam" id="PF14602">
    <property type="entry name" value="Hexapep_2"/>
    <property type="match status" value="1"/>
</dbReference>
<dbReference type="Pfam" id="PF00483">
    <property type="entry name" value="NTP_transferase"/>
    <property type="match status" value="1"/>
</dbReference>
<dbReference type="SUPFAM" id="SSF53448">
    <property type="entry name" value="Nucleotide-diphospho-sugar transferases"/>
    <property type="match status" value="1"/>
</dbReference>
<dbReference type="SUPFAM" id="SSF51161">
    <property type="entry name" value="Trimeric LpxA-like enzymes"/>
    <property type="match status" value="1"/>
</dbReference>
<dbReference type="PROSITE" id="PS00101">
    <property type="entry name" value="HEXAPEP_TRANSFERASES"/>
    <property type="match status" value="1"/>
</dbReference>
<accession>C1CDY3</accession>